<reference key="1">
    <citation type="journal article" date="1994" name="Proc. Natl. Acad. Sci. U.S.A.">
        <title>Loss of all ndh genes as determined by sequencing the entire chloroplast genome of the black pine Pinus thunbergii.</title>
        <authorList>
            <person name="Wakasugi T."/>
            <person name="Tsudzuki J."/>
            <person name="Ito S."/>
            <person name="Nakashima K."/>
            <person name="Tsudzuki T."/>
            <person name="Sugiura M."/>
        </authorList>
    </citation>
    <scope>NUCLEOTIDE SEQUENCE [LARGE SCALE GENOMIC DNA]</scope>
</reference>
<keyword id="KW-0150">Chloroplast</keyword>
<keyword id="KW-0201">Cytochrome c-type biogenesis</keyword>
<keyword id="KW-0472">Membrane</keyword>
<keyword id="KW-0934">Plastid</keyword>
<keyword id="KW-0793">Thylakoid</keyword>
<keyword id="KW-0812">Transmembrane</keyword>
<keyword id="KW-1133">Transmembrane helix</keyword>
<comment type="function">
    <text evidence="1">Required during biogenesis of c-type cytochromes (cytochrome c6 and cytochrome f) at the step of heme attachment.</text>
</comment>
<comment type="subunit">
    <text evidence="1">May interact with Ccs1.</text>
</comment>
<comment type="subcellular location">
    <subcellularLocation>
        <location evidence="1">Plastid</location>
        <location evidence="1">Chloroplast thylakoid membrane</location>
        <topology evidence="1">Multi-pass membrane protein</topology>
    </subcellularLocation>
</comment>
<comment type="similarity">
    <text evidence="1">Belongs to the CcmF/CycK/Ccl1/NrfE/CcsA family.</text>
</comment>
<geneLocation type="chloroplast"/>
<feature type="chain" id="PRO_0000201615" description="Cytochrome c biogenesis protein CcsA">
    <location>
        <begin position="1"/>
        <end position="320"/>
    </location>
</feature>
<feature type="transmembrane region" description="Helical" evidence="1">
    <location>
        <begin position="9"/>
        <end position="29"/>
    </location>
</feature>
<feature type="transmembrane region" description="Helical" evidence="1">
    <location>
        <begin position="36"/>
        <end position="56"/>
    </location>
</feature>
<feature type="transmembrane region" description="Helical" evidence="1">
    <location>
        <begin position="70"/>
        <end position="90"/>
    </location>
</feature>
<feature type="transmembrane region" description="Helical" evidence="1">
    <location>
        <begin position="97"/>
        <end position="117"/>
    </location>
</feature>
<feature type="transmembrane region" description="Helical" evidence="1">
    <location>
        <begin position="143"/>
        <end position="163"/>
    </location>
</feature>
<feature type="transmembrane region" description="Helical" evidence="1">
    <location>
        <begin position="227"/>
        <end position="247"/>
    </location>
</feature>
<feature type="transmembrane region" description="Helical" evidence="1">
    <location>
        <begin position="254"/>
        <end position="274"/>
    </location>
</feature>
<feature type="transmembrane region" description="Helical" evidence="1">
    <location>
        <begin position="288"/>
        <end position="308"/>
    </location>
</feature>
<gene>
    <name evidence="1" type="primary">ccsA</name>
</gene>
<organism>
    <name type="scientific">Pinus thunbergii</name>
    <name type="common">Japanese black pine</name>
    <name type="synonym">Pinus thunbergiana</name>
    <dbReference type="NCBI Taxonomy" id="3350"/>
    <lineage>
        <taxon>Eukaryota</taxon>
        <taxon>Viridiplantae</taxon>
        <taxon>Streptophyta</taxon>
        <taxon>Embryophyta</taxon>
        <taxon>Tracheophyta</taxon>
        <taxon>Spermatophyta</taxon>
        <taxon>Pinopsida</taxon>
        <taxon>Pinidae</taxon>
        <taxon>Conifers I</taxon>
        <taxon>Pinales</taxon>
        <taxon>Pinaceae</taxon>
        <taxon>Pinus</taxon>
        <taxon>Pinus subgen. Pinus</taxon>
    </lineage>
</organism>
<proteinExistence type="inferred from homology"/>
<sequence>MIFITLEHILAHISFSLILVVTLIYWGTLVYRIEGLSSSGGKGMIVTFLCTTGLLINRWLYSGHLPLSNLYESFMFLSWSSSVFHILLEVRSRDDRWLGAITAPSAMLTHGFATLGLPEEMQRSGMLVPALQSHWSMMHVSMILFSYATLLCGSLASIALLVIMSGVNRQVIFGAMDNLFSRAILPNENFYSHEKQKSDLQYTVYFSSTNYRKCQLIKQLDHWSYRAIGLGFSLSTIGTLSGAIWANEAWGSYWSWDPKETWALITWTIFAIYLHTRMNKGWQGEEPAIVASLGFFIVWIRYLGVNLLGIGLHSYGWLEP</sequence>
<dbReference type="EMBL" id="D17510">
    <property type="protein sequence ID" value="BAA04448.1"/>
    <property type="molecule type" value="Genomic_DNA"/>
</dbReference>
<dbReference type="PIR" id="T07572">
    <property type="entry name" value="T07572"/>
</dbReference>
<dbReference type="RefSeq" id="NP_042493.1">
    <property type="nucleotide sequence ID" value="NC_001631.1"/>
</dbReference>
<dbReference type="SMR" id="P41650"/>
<dbReference type="GeneID" id="1457616"/>
<dbReference type="GO" id="GO:0009535">
    <property type="term" value="C:chloroplast thylakoid membrane"/>
    <property type="evidence" value="ECO:0007669"/>
    <property type="project" value="UniProtKB-SubCell"/>
</dbReference>
<dbReference type="GO" id="GO:0005886">
    <property type="term" value="C:plasma membrane"/>
    <property type="evidence" value="ECO:0007669"/>
    <property type="project" value="TreeGrafter"/>
</dbReference>
<dbReference type="GO" id="GO:0020037">
    <property type="term" value="F:heme binding"/>
    <property type="evidence" value="ECO:0007669"/>
    <property type="project" value="InterPro"/>
</dbReference>
<dbReference type="GO" id="GO:0017004">
    <property type="term" value="P:cytochrome complex assembly"/>
    <property type="evidence" value="ECO:0007669"/>
    <property type="project" value="UniProtKB-UniRule"/>
</dbReference>
<dbReference type="HAMAP" id="MF_01391">
    <property type="entry name" value="CytC_CcsA"/>
    <property type="match status" value="1"/>
</dbReference>
<dbReference type="InterPro" id="IPR002541">
    <property type="entry name" value="Cyt_c_assembly"/>
</dbReference>
<dbReference type="InterPro" id="IPR017562">
    <property type="entry name" value="Cyt_c_biogenesis_CcsA"/>
</dbReference>
<dbReference type="InterPro" id="IPR045062">
    <property type="entry name" value="Cyt_c_biogenesis_CcsA/CcmC"/>
</dbReference>
<dbReference type="NCBIfam" id="TIGR03144">
    <property type="entry name" value="cytochr_II_ccsB"/>
    <property type="match status" value="1"/>
</dbReference>
<dbReference type="PANTHER" id="PTHR30071:SF1">
    <property type="entry name" value="CYTOCHROME B_B6 PROTEIN-RELATED"/>
    <property type="match status" value="1"/>
</dbReference>
<dbReference type="PANTHER" id="PTHR30071">
    <property type="entry name" value="HEME EXPORTER PROTEIN C"/>
    <property type="match status" value="1"/>
</dbReference>
<dbReference type="Pfam" id="PF01578">
    <property type="entry name" value="Cytochrom_C_asm"/>
    <property type="match status" value="1"/>
</dbReference>
<protein>
    <recommendedName>
        <fullName evidence="1">Cytochrome c biogenesis protein CcsA</fullName>
    </recommendedName>
</protein>
<name>CCSA_PINTH</name>
<accession>P41650</accession>
<evidence type="ECO:0000255" key="1">
    <source>
        <dbReference type="HAMAP-Rule" id="MF_01391"/>
    </source>
</evidence>